<gene>
    <name type="primary">TNNC2</name>
</gene>
<organism>
    <name type="scientific">Meleagris gallopavo</name>
    <name type="common">Wild turkey</name>
    <dbReference type="NCBI Taxonomy" id="9103"/>
    <lineage>
        <taxon>Eukaryota</taxon>
        <taxon>Metazoa</taxon>
        <taxon>Chordata</taxon>
        <taxon>Craniata</taxon>
        <taxon>Vertebrata</taxon>
        <taxon>Euteleostomi</taxon>
        <taxon>Archelosauria</taxon>
        <taxon>Archosauria</taxon>
        <taxon>Dinosauria</taxon>
        <taxon>Saurischia</taxon>
        <taxon>Theropoda</taxon>
        <taxon>Coelurosauria</taxon>
        <taxon>Aves</taxon>
        <taxon>Neognathae</taxon>
        <taxon>Galloanserae</taxon>
        <taxon>Galliformes</taxon>
        <taxon>Phasianidae</taxon>
        <taxon>Meleagridinae</taxon>
        <taxon>Meleagris</taxon>
    </lineage>
</organism>
<proteinExistence type="evidence at protein level"/>
<evidence type="ECO:0000255" key="1">
    <source>
        <dbReference type="PROSITE-ProRule" id="PRU00448"/>
    </source>
</evidence>
<evidence type="ECO:0000305" key="2"/>
<evidence type="ECO:0007829" key="3">
    <source>
        <dbReference type="PDB" id="5TNC"/>
    </source>
</evidence>
<reference key="1">
    <citation type="journal article" date="1991" name="J. Biol. Chem.">
        <title>Determination of and corrections to sequences of turkey and chicken troponins-C. Effects of Thr-130 to Ile mutation on Ca2+ affinity.</title>
        <authorList>
            <person name="Golosinska K."/>
            <person name="Pearlstone J.R."/>
            <person name="Borgford T."/>
            <person name="Oikawa K."/>
            <person name="Kay C.M."/>
            <person name="Carpenter M.R."/>
            <person name="Smillie L.B."/>
        </authorList>
    </citation>
    <scope>PROTEIN SEQUENCE</scope>
</reference>
<reference key="2">
    <citation type="journal article" date="1988" name="J. Mol. Biol.">
        <title>Refined crystal structure of troponin C from turkey skeletal muscle at 2.0-A resolution.</title>
        <authorList>
            <person name="Herzberg O."/>
            <person name="James M.N.G."/>
        </authorList>
    </citation>
    <scope>X-RAY CRYSTALLOGRAPHY (2.0 ANGSTROMS)</scope>
</reference>
<reference key="3">
    <citation type="journal article" date="1993" name="Biochemistry">
        <title>1H-NMR resonance assignments, secondary structure, and global fold of the TR1C fragment of turkey skeletal troponin C in the calcium-free state.</title>
        <authorList>
            <person name="Findlay W.A."/>
            <person name="Sykes B.D."/>
        </authorList>
    </citation>
    <scope>STRUCTURE BY NMR OF 12-87</scope>
</reference>
<reference key="4">
    <citation type="journal article" date="1994" name="J. Biol. Chem.">
        <title>Solution structure of the TR1C fragment of skeletal muscle troponin-C.</title>
        <authorList>
            <person name="Findlay W.A."/>
            <person name="Soenninchen F.D."/>
            <person name="Sykes B.D."/>
        </authorList>
    </citation>
    <scope>STRUCTURE BY NMR OF 12-87</scope>
</reference>
<dbReference type="PIR" id="A40803">
    <property type="entry name" value="A40803"/>
</dbReference>
<dbReference type="PDB" id="1TRF">
    <property type="method" value="NMR"/>
    <property type="chains" value="A=12-87"/>
</dbReference>
<dbReference type="PDB" id="5TNC">
    <property type="method" value="X-ray"/>
    <property type="resolution" value="2.00 A"/>
    <property type="chains" value="A=2-162"/>
</dbReference>
<dbReference type="PDBsum" id="1TRF"/>
<dbReference type="PDBsum" id="5TNC"/>
<dbReference type="BMRB" id="P10246"/>
<dbReference type="SMR" id="P10246"/>
<dbReference type="FunCoup" id="P10246">
    <property type="interactions" value="3"/>
</dbReference>
<dbReference type="HOGENOM" id="CLU_061288_2_5_1"/>
<dbReference type="InParanoid" id="P10246"/>
<dbReference type="OMA" id="VETWEVD"/>
<dbReference type="OrthoDB" id="263893at2759"/>
<dbReference type="EvolutionaryTrace" id="P10246"/>
<dbReference type="Proteomes" id="UP000001645">
    <property type="component" value="Unplaced"/>
</dbReference>
<dbReference type="GO" id="GO:0016460">
    <property type="term" value="C:myosin II complex"/>
    <property type="evidence" value="ECO:0007669"/>
    <property type="project" value="TreeGrafter"/>
</dbReference>
<dbReference type="GO" id="GO:0005509">
    <property type="term" value="F:calcium ion binding"/>
    <property type="evidence" value="ECO:0007669"/>
    <property type="project" value="InterPro"/>
</dbReference>
<dbReference type="CDD" id="cd00051">
    <property type="entry name" value="EFh"/>
    <property type="match status" value="2"/>
</dbReference>
<dbReference type="FunFam" id="1.10.238.10:FF:000107">
    <property type="entry name" value="Troponin C, skeletal muscle"/>
    <property type="match status" value="1"/>
</dbReference>
<dbReference type="Gene3D" id="1.10.238.10">
    <property type="entry name" value="EF-hand"/>
    <property type="match status" value="2"/>
</dbReference>
<dbReference type="InterPro" id="IPR050230">
    <property type="entry name" value="CALM/Myosin/TropC-like"/>
</dbReference>
<dbReference type="InterPro" id="IPR011992">
    <property type="entry name" value="EF-hand-dom_pair"/>
</dbReference>
<dbReference type="InterPro" id="IPR018247">
    <property type="entry name" value="EF_Hand_1_Ca_BS"/>
</dbReference>
<dbReference type="InterPro" id="IPR002048">
    <property type="entry name" value="EF_hand_dom"/>
</dbReference>
<dbReference type="PANTHER" id="PTHR23048">
    <property type="entry name" value="MYOSIN LIGHT CHAIN 1, 3"/>
    <property type="match status" value="1"/>
</dbReference>
<dbReference type="PANTHER" id="PTHR23048:SF57">
    <property type="entry name" value="TROPONIN C2, FAST SKELETAL TYPE"/>
    <property type="match status" value="1"/>
</dbReference>
<dbReference type="Pfam" id="PF13499">
    <property type="entry name" value="EF-hand_7"/>
    <property type="match status" value="2"/>
</dbReference>
<dbReference type="SMART" id="SM00054">
    <property type="entry name" value="EFh"/>
    <property type="match status" value="4"/>
</dbReference>
<dbReference type="SUPFAM" id="SSF47473">
    <property type="entry name" value="EF-hand"/>
    <property type="match status" value="1"/>
</dbReference>
<dbReference type="PROSITE" id="PS00018">
    <property type="entry name" value="EF_HAND_1"/>
    <property type="match status" value="4"/>
</dbReference>
<dbReference type="PROSITE" id="PS50222">
    <property type="entry name" value="EF_HAND_2"/>
    <property type="match status" value="4"/>
</dbReference>
<accession>P10246</accession>
<comment type="function">
    <text>Troponin is the central regulatory protein of striated muscle contraction. Tn consists of three components: Tn-I which is the inhibitor of actomyosin ATPase, Tn-T which contains the binding site for tropomyosin and Tn-C. The binding of calcium to Tn-C abolishes the inhibitory action of Tn on actin filaments.</text>
</comment>
<comment type="miscellaneous">
    <text>Skeletal muscle troponin C binds four calcium ions.</text>
</comment>
<comment type="similarity">
    <text evidence="2">Belongs to the troponin C family.</text>
</comment>
<protein>
    <recommendedName>
        <fullName>Troponin C, skeletal muscle</fullName>
    </recommendedName>
</protein>
<sequence length="162" mass="18284">PSMTDQQAEARAFLSEEMIAEFKAAFDMFDADGGGDISTKELGTVMRMLGQNPTKEELDAIIEEVDEDGSGTIDFEEFLVMMVRQMKEDAKGKSEEELANCFRIFDKNADGFIDIEELGEILRATGEHVTEEEIEDLMKDSDKNNDGRIDFDEFLKMMEGVQ</sequence>
<name>TNNC2_MELGA</name>
<keyword id="KW-0002">3D-structure</keyword>
<keyword id="KW-0106">Calcium</keyword>
<keyword id="KW-0903">Direct protein sequencing</keyword>
<keyword id="KW-0479">Metal-binding</keyword>
<keyword id="KW-0514">Muscle protein</keyword>
<keyword id="KW-1185">Reference proteome</keyword>
<keyword id="KW-0677">Repeat</keyword>
<feature type="chain" id="PRO_0000073708" description="Troponin C, skeletal muscle">
    <location>
        <begin position="1"/>
        <end position="162"/>
    </location>
</feature>
<feature type="domain" description="EF-hand 1" evidence="1">
    <location>
        <begin position="17"/>
        <end position="52"/>
    </location>
</feature>
<feature type="domain" description="EF-hand 2" evidence="1">
    <location>
        <begin position="53"/>
        <end position="88"/>
    </location>
</feature>
<feature type="domain" description="EF-hand 3" evidence="1">
    <location>
        <begin position="93"/>
        <end position="128"/>
    </location>
</feature>
<feature type="domain" description="EF-hand 4" evidence="1">
    <location>
        <begin position="129"/>
        <end position="162"/>
    </location>
</feature>
<feature type="binding site" evidence="1">
    <location>
        <position position="30"/>
    </location>
    <ligand>
        <name>Ca(2+)</name>
        <dbReference type="ChEBI" id="CHEBI:29108"/>
        <label>1</label>
    </ligand>
</feature>
<feature type="binding site" evidence="1">
    <location>
        <position position="32"/>
    </location>
    <ligand>
        <name>Ca(2+)</name>
        <dbReference type="ChEBI" id="CHEBI:29108"/>
        <label>1</label>
    </ligand>
</feature>
<feature type="binding site" evidence="1">
    <location>
        <position position="36"/>
    </location>
    <ligand>
        <name>Ca(2+)</name>
        <dbReference type="ChEBI" id="CHEBI:29108"/>
        <label>1</label>
    </ligand>
</feature>
<feature type="binding site" evidence="1">
    <location>
        <position position="41"/>
    </location>
    <ligand>
        <name>Ca(2+)</name>
        <dbReference type="ChEBI" id="CHEBI:29108"/>
        <label>1</label>
    </ligand>
</feature>
<feature type="binding site" evidence="1">
    <location>
        <position position="66"/>
    </location>
    <ligand>
        <name>Ca(2+)</name>
        <dbReference type="ChEBI" id="CHEBI:29108"/>
        <label>2</label>
    </ligand>
</feature>
<feature type="binding site" evidence="1">
    <location>
        <position position="68"/>
    </location>
    <ligand>
        <name>Ca(2+)</name>
        <dbReference type="ChEBI" id="CHEBI:29108"/>
        <label>2</label>
    </ligand>
</feature>
<feature type="binding site" evidence="1">
    <location>
        <position position="70"/>
    </location>
    <ligand>
        <name>Ca(2+)</name>
        <dbReference type="ChEBI" id="CHEBI:29108"/>
        <label>2</label>
    </ligand>
</feature>
<feature type="binding site" evidence="1">
    <location>
        <position position="72"/>
    </location>
    <ligand>
        <name>Ca(2+)</name>
        <dbReference type="ChEBI" id="CHEBI:29108"/>
        <label>2</label>
    </ligand>
</feature>
<feature type="binding site" evidence="1">
    <location>
        <position position="77"/>
    </location>
    <ligand>
        <name>Ca(2+)</name>
        <dbReference type="ChEBI" id="CHEBI:29108"/>
        <label>2</label>
    </ligand>
</feature>
<feature type="binding site" evidence="1">
    <location>
        <position position="106"/>
    </location>
    <ligand>
        <name>Ca(2+)</name>
        <dbReference type="ChEBI" id="CHEBI:29108"/>
        <label>3</label>
    </ligand>
</feature>
<feature type="binding site" evidence="1">
    <location>
        <position position="108"/>
    </location>
    <ligand>
        <name>Ca(2+)</name>
        <dbReference type="ChEBI" id="CHEBI:29108"/>
        <label>3</label>
    </ligand>
</feature>
<feature type="binding site" evidence="1">
    <location>
        <position position="110"/>
    </location>
    <ligand>
        <name>Ca(2+)</name>
        <dbReference type="ChEBI" id="CHEBI:29108"/>
        <label>3</label>
    </ligand>
</feature>
<feature type="binding site" evidence="1">
    <location>
        <position position="117"/>
    </location>
    <ligand>
        <name>Ca(2+)</name>
        <dbReference type="ChEBI" id="CHEBI:29108"/>
        <label>3</label>
    </ligand>
</feature>
<feature type="binding site" evidence="1">
    <location>
        <position position="142"/>
    </location>
    <ligand>
        <name>Ca(2+)</name>
        <dbReference type="ChEBI" id="CHEBI:29108"/>
        <label>4</label>
    </ligand>
</feature>
<feature type="binding site" evidence="1">
    <location>
        <position position="144"/>
    </location>
    <ligand>
        <name>Ca(2+)</name>
        <dbReference type="ChEBI" id="CHEBI:29108"/>
        <label>4</label>
    </ligand>
</feature>
<feature type="binding site" evidence="1">
    <location>
        <position position="146"/>
    </location>
    <ligand>
        <name>Ca(2+)</name>
        <dbReference type="ChEBI" id="CHEBI:29108"/>
        <label>4</label>
    </ligand>
</feature>
<feature type="binding site" evidence="1">
    <location>
        <position position="148"/>
    </location>
    <ligand>
        <name>Ca(2+)</name>
        <dbReference type="ChEBI" id="CHEBI:29108"/>
        <label>4</label>
    </ligand>
</feature>
<feature type="binding site" evidence="1">
    <location>
        <position position="153"/>
    </location>
    <ligand>
        <name>Ca(2+)</name>
        <dbReference type="ChEBI" id="CHEBI:29108"/>
        <label>4</label>
    </ligand>
</feature>
<feature type="helix" evidence="3">
    <location>
        <begin position="3"/>
        <end position="13"/>
    </location>
</feature>
<feature type="helix" evidence="3">
    <location>
        <begin position="16"/>
        <end position="26"/>
    </location>
</feature>
<feature type="helix" evidence="3">
    <location>
        <begin position="27"/>
        <end position="29"/>
    </location>
</feature>
<feature type="strand" evidence="3">
    <location>
        <begin position="31"/>
        <end position="33"/>
    </location>
</feature>
<feature type="strand" evidence="3">
    <location>
        <begin position="35"/>
        <end position="38"/>
    </location>
</feature>
<feature type="turn" evidence="3">
    <location>
        <begin position="39"/>
        <end position="41"/>
    </location>
</feature>
<feature type="helix" evidence="3">
    <location>
        <begin position="42"/>
        <end position="48"/>
    </location>
</feature>
<feature type="helix" evidence="3">
    <location>
        <begin position="55"/>
        <end position="65"/>
    </location>
</feature>
<feature type="strand" evidence="3">
    <location>
        <begin position="67"/>
        <end position="69"/>
    </location>
</feature>
<feature type="strand" evidence="3">
    <location>
        <begin position="72"/>
        <end position="74"/>
    </location>
</feature>
<feature type="helix" evidence="3">
    <location>
        <begin position="75"/>
        <end position="105"/>
    </location>
</feature>
<feature type="helix" evidence="3">
    <location>
        <begin position="115"/>
        <end position="123"/>
    </location>
</feature>
<feature type="turn" evidence="3">
    <location>
        <begin position="124"/>
        <end position="126"/>
    </location>
</feature>
<feature type="helix" evidence="3">
    <location>
        <begin position="131"/>
        <end position="141"/>
    </location>
</feature>
<feature type="strand" evidence="3">
    <location>
        <begin position="145"/>
        <end position="149"/>
    </location>
</feature>
<feature type="helix" evidence="3">
    <location>
        <begin position="151"/>
        <end position="159"/>
    </location>
</feature>